<name>ARGB_MYCPA</name>
<proteinExistence type="inferred from homology"/>
<keyword id="KW-0028">Amino-acid biosynthesis</keyword>
<keyword id="KW-0055">Arginine biosynthesis</keyword>
<keyword id="KW-0067">ATP-binding</keyword>
<keyword id="KW-0963">Cytoplasm</keyword>
<keyword id="KW-0418">Kinase</keyword>
<keyword id="KW-0547">Nucleotide-binding</keyword>
<keyword id="KW-1185">Reference proteome</keyword>
<keyword id="KW-0808">Transferase</keyword>
<feature type="chain" id="PRO_0000112636" description="Acetylglutamate kinase">
    <location>
        <begin position="1"/>
        <end position="295"/>
    </location>
</feature>
<feature type="binding site" evidence="1">
    <location>
        <begin position="70"/>
        <end position="71"/>
    </location>
    <ligand>
        <name>substrate</name>
    </ligand>
</feature>
<feature type="binding site" evidence="1">
    <location>
        <position position="92"/>
    </location>
    <ligand>
        <name>substrate</name>
    </ligand>
</feature>
<feature type="binding site" evidence="1">
    <location>
        <position position="191"/>
    </location>
    <ligand>
        <name>substrate</name>
    </ligand>
</feature>
<feature type="site" description="Transition state stabilizer" evidence="1">
    <location>
        <position position="35"/>
    </location>
</feature>
<feature type="site" description="Transition state stabilizer" evidence="1">
    <location>
        <position position="252"/>
    </location>
</feature>
<dbReference type="EC" id="2.7.2.8" evidence="1"/>
<dbReference type="EMBL" id="AE016958">
    <property type="protein sequence ID" value="AAS03680.1"/>
    <property type="molecule type" value="Genomic_DNA"/>
</dbReference>
<dbReference type="RefSeq" id="WP_003876277.1">
    <property type="nucleotide sequence ID" value="NZ_CP106873.1"/>
</dbReference>
<dbReference type="SMR" id="Q740I7"/>
<dbReference type="STRING" id="262316.MAP_1363"/>
<dbReference type="KEGG" id="mpa:MAP_1363"/>
<dbReference type="eggNOG" id="COG0548">
    <property type="taxonomic scope" value="Bacteria"/>
</dbReference>
<dbReference type="HOGENOM" id="CLU_053680_0_1_11"/>
<dbReference type="UniPathway" id="UPA00068">
    <property type="reaction ID" value="UER00107"/>
</dbReference>
<dbReference type="Proteomes" id="UP000000580">
    <property type="component" value="Chromosome"/>
</dbReference>
<dbReference type="GO" id="GO:0005737">
    <property type="term" value="C:cytoplasm"/>
    <property type="evidence" value="ECO:0007669"/>
    <property type="project" value="UniProtKB-SubCell"/>
</dbReference>
<dbReference type="GO" id="GO:0003991">
    <property type="term" value="F:acetylglutamate kinase activity"/>
    <property type="evidence" value="ECO:0007669"/>
    <property type="project" value="UniProtKB-UniRule"/>
</dbReference>
<dbReference type="GO" id="GO:0005524">
    <property type="term" value="F:ATP binding"/>
    <property type="evidence" value="ECO:0007669"/>
    <property type="project" value="UniProtKB-UniRule"/>
</dbReference>
<dbReference type="GO" id="GO:0042450">
    <property type="term" value="P:arginine biosynthetic process via ornithine"/>
    <property type="evidence" value="ECO:0007669"/>
    <property type="project" value="UniProtKB-UniRule"/>
</dbReference>
<dbReference type="GO" id="GO:0006526">
    <property type="term" value="P:L-arginine biosynthetic process"/>
    <property type="evidence" value="ECO:0007669"/>
    <property type="project" value="UniProtKB-UniPathway"/>
</dbReference>
<dbReference type="CDD" id="cd04250">
    <property type="entry name" value="AAK_NAGK-C"/>
    <property type="match status" value="1"/>
</dbReference>
<dbReference type="FunFam" id="3.40.1160.10:FF:000004">
    <property type="entry name" value="Acetylglutamate kinase"/>
    <property type="match status" value="1"/>
</dbReference>
<dbReference type="Gene3D" id="3.40.1160.10">
    <property type="entry name" value="Acetylglutamate kinase-like"/>
    <property type="match status" value="1"/>
</dbReference>
<dbReference type="HAMAP" id="MF_00082">
    <property type="entry name" value="ArgB"/>
    <property type="match status" value="1"/>
</dbReference>
<dbReference type="InterPro" id="IPR036393">
    <property type="entry name" value="AceGlu_kinase-like_sf"/>
</dbReference>
<dbReference type="InterPro" id="IPR004662">
    <property type="entry name" value="AcgluKinase_fam"/>
</dbReference>
<dbReference type="InterPro" id="IPR037528">
    <property type="entry name" value="ArgB"/>
</dbReference>
<dbReference type="InterPro" id="IPR001048">
    <property type="entry name" value="Asp/Glu/Uridylate_kinase"/>
</dbReference>
<dbReference type="InterPro" id="IPR001057">
    <property type="entry name" value="Glu/AcGlu_kinase"/>
</dbReference>
<dbReference type="InterPro" id="IPR041727">
    <property type="entry name" value="NAGK-C"/>
</dbReference>
<dbReference type="NCBIfam" id="TIGR00761">
    <property type="entry name" value="argB"/>
    <property type="match status" value="1"/>
</dbReference>
<dbReference type="PANTHER" id="PTHR23342">
    <property type="entry name" value="N-ACETYLGLUTAMATE SYNTHASE"/>
    <property type="match status" value="1"/>
</dbReference>
<dbReference type="PANTHER" id="PTHR23342:SF0">
    <property type="entry name" value="N-ACETYLGLUTAMATE SYNTHASE, MITOCHONDRIAL"/>
    <property type="match status" value="1"/>
</dbReference>
<dbReference type="Pfam" id="PF00696">
    <property type="entry name" value="AA_kinase"/>
    <property type="match status" value="1"/>
</dbReference>
<dbReference type="PIRSF" id="PIRSF000728">
    <property type="entry name" value="NAGK"/>
    <property type="match status" value="1"/>
</dbReference>
<dbReference type="PRINTS" id="PR00474">
    <property type="entry name" value="GLU5KINASE"/>
</dbReference>
<dbReference type="SUPFAM" id="SSF53633">
    <property type="entry name" value="Carbamate kinase-like"/>
    <property type="match status" value="1"/>
</dbReference>
<evidence type="ECO:0000255" key="1">
    <source>
        <dbReference type="HAMAP-Rule" id="MF_00082"/>
    </source>
</evidence>
<accession>Q740I7</accession>
<reference key="1">
    <citation type="journal article" date="2005" name="Proc. Natl. Acad. Sci. U.S.A.">
        <title>The complete genome sequence of Mycobacterium avium subspecies paratuberculosis.</title>
        <authorList>
            <person name="Li L."/>
            <person name="Bannantine J.P."/>
            <person name="Zhang Q."/>
            <person name="Amonsin A."/>
            <person name="May B.J."/>
            <person name="Alt D."/>
            <person name="Banerji N."/>
            <person name="Kanjilal S."/>
            <person name="Kapur V."/>
        </authorList>
    </citation>
    <scope>NUCLEOTIDE SEQUENCE [LARGE SCALE GENOMIC DNA]</scope>
    <source>
        <strain>ATCC BAA-968 / K-10</strain>
    </source>
</reference>
<gene>
    <name evidence="1" type="primary">argB</name>
    <name type="ordered locus">MAP_1363</name>
</gene>
<organism>
    <name type="scientific">Mycolicibacterium paratuberculosis (strain ATCC BAA-968 / K-10)</name>
    <name type="common">Mycobacterium paratuberculosis</name>
    <dbReference type="NCBI Taxonomy" id="262316"/>
    <lineage>
        <taxon>Bacteria</taxon>
        <taxon>Bacillati</taxon>
        <taxon>Actinomycetota</taxon>
        <taxon>Actinomycetes</taxon>
        <taxon>Mycobacteriales</taxon>
        <taxon>Mycobacteriaceae</taxon>
        <taxon>Mycobacterium</taxon>
        <taxon>Mycobacterium avium complex (MAC)</taxon>
    </lineage>
</organism>
<sequence>MTPSTEALPTAVKAQVLAEALPWLKQLHGKIVVIKYGGNAMTDDTLRRAFAADMAFLRNCGIHPVVVHGGGPQITAMLRRLGIPGDFKGGFRVTTPEVLDVARMVLFGQVGRELVNLINAHGPYAVGITGEDAQLFTAVRRSVTVDGVTTDIGLVGDVERVNAAAVLDLIAARRIPVVSTLAPDAEGVVHNINADTAAAALAEALGAEKLLMLTDVEGLYTSWPNRDSLVSEIDTATLSQLLPTLEAGMIPKVEACLRAVSAGVPSAHVIDGRVEHCVLVELFTDEGTGTKVVSS</sequence>
<comment type="function">
    <text evidence="1">Catalyzes the ATP-dependent phosphorylation of N-acetyl-L-glutamate.</text>
</comment>
<comment type="catalytic activity">
    <reaction evidence="1">
        <text>N-acetyl-L-glutamate + ATP = N-acetyl-L-glutamyl 5-phosphate + ADP</text>
        <dbReference type="Rhea" id="RHEA:14629"/>
        <dbReference type="ChEBI" id="CHEBI:30616"/>
        <dbReference type="ChEBI" id="CHEBI:44337"/>
        <dbReference type="ChEBI" id="CHEBI:57936"/>
        <dbReference type="ChEBI" id="CHEBI:456216"/>
        <dbReference type="EC" id="2.7.2.8"/>
    </reaction>
</comment>
<comment type="pathway">
    <text evidence="1">Amino-acid biosynthesis; L-arginine biosynthesis; N(2)-acetyl-L-ornithine from L-glutamate: step 2/4.</text>
</comment>
<comment type="subcellular location">
    <subcellularLocation>
        <location evidence="1">Cytoplasm</location>
    </subcellularLocation>
</comment>
<comment type="similarity">
    <text evidence="1">Belongs to the acetylglutamate kinase family. ArgB subfamily.</text>
</comment>
<protein>
    <recommendedName>
        <fullName evidence="1">Acetylglutamate kinase</fullName>
        <ecNumber evidence="1">2.7.2.8</ecNumber>
    </recommendedName>
    <alternativeName>
        <fullName evidence="1">N-acetyl-L-glutamate 5-phosphotransferase</fullName>
    </alternativeName>
    <alternativeName>
        <fullName evidence="1">NAG kinase</fullName>
        <shortName evidence="1">NAGK</shortName>
    </alternativeName>
</protein>